<protein>
    <recommendedName>
        <fullName evidence="1">2-C-methyl-D-erythritol 4-phosphate cytidylyltransferase</fullName>
        <ecNumber evidence="1">2.7.7.60</ecNumber>
    </recommendedName>
    <alternativeName>
        <fullName evidence="1">4-diphosphocytidyl-2C-methyl-D-erythritol synthase</fullName>
    </alternativeName>
    <alternativeName>
        <fullName evidence="1">MEP cytidylyltransferase</fullName>
        <shortName evidence="1">MCT</shortName>
    </alternativeName>
</protein>
<feature type="chain" id="PRO_1000094343" description="2-C-methyl-D-erythritol 4-phosphate cytidylyltransferase">
    <location>
        <begin position="1"/>
        <end position="236"/>
    </location>
</feature>
<feature type="site" description="Transition state stabilizer" evidence="1">
    <location>
        <position position="20"/>
    </location>
</feature>
<feature type="site" description="Transition state stabilizer" evidence="1">
    <location>
        <position position="27"/>
    </location>
</feature>
<feature type="site" description="Positions MEP for the nucleophilic attack" evidence="1">
    <location>
        <position position="157"/>
    </location>
</feature>
<feature type="site" description="Positions MEP for the nucleophilic attack" evidence="1">
    <location>
        <position position="213"/>
    </location>
</feature>
<proteinExistence type="inferred from homology"/>
<dbReference type="EC" id="2.7.7.60" evidence="1"/>
<dbReference type="EMBL" id="CP001144">
    <property type="protein sequence ID" value="ACH76664.1"/>
    <property type="molecule type" value="Genomic_DNA"/>
</dbReference>
<dbReference type="RefSeq" id="WP_000741653.1">
    <property type="nucleotide sequence ID" value="NC_011205.1"/>
</dbReference>
<dbReference type="SMR" id="B5FTS5"/>
<dbReference type="KEGG" id="sed:SeD_A3240"/>
<dbReference type="HOGENOM" id="CLU_061281_3_1_6"/>
<dbReference type="UniPathway" id="UPA00056">
    <property type="reaction ID" value="UER00093"/>
</dbReference>
<dbReference type="Proteomes" id="UP000008322">
    <property type="component" value="Chromosome"/>
</dbReference>
<dbReference type="GO" id="GO:0050518">
    <property type="term" value="F:2-C-methyl-D-erythritol 4-phosphate cytidylyltransferase activity"/>
    <property type="evidence" value="ECO:0007669"/>
    <property type="project" value="UniProtKB-UniRule"/>
</dbReference>
<dbReference type="GO" id="GO:0019288">
    <property type="term" value="P:isopentenyl diphosphate biosynthetic process, methylerythritol 4-phosphate pathway"/>
    <property type="evidence" value="ECO:0007669"/>
    <property type="project" value="UniProtKB-UniRule"/>
</dbReference>
<dbReference type="CDD" id="cd02516">
    <property type="entry name" value="CDP-ME_synthetase"/>
    <property type="match status" value="1"/>
</dbReference>
<dbReference type="FunFam" id="3.90.550.10:FF:000003">
    <property type="entry name" value="2-C-methyl-D-erythritol 4-phosphate cytidylyltransferase"/>
    <property type="match status" value="1"/>
</dbReference>
<dbReference type="Gene3D" id="3.90.550.10">
    <property type="entry name" value="Spore Coat Polysaccharide Biosynthesis Protein SpsA, Chain A"/>
    <property type="match status" value="1"/>
</dbReference>
<dbReference type="HAMAP" id="MF_00108">
    <property type="entry name" value="IspD"/>
    <property type="match status" value="1"/>
</dbReference>
<dbReference type="InterPro" id="IPR001228">
    <property type="entry name" value="IspD"/>
</dbReference>
<dbReference type="InterPro" id="IPR034683">
    <property type="entry name" value="IspD/TarI"/>
</dbReference>
<dbReference type="InterPro" id="IPR050088">
    <property type="entry name" value="IspD/TarI_cytidylyltransf_bact"/>
</dbReference>
<dbReference type="InterPro" id="IPR018294">
    <property type="entry name" value="ISPD_synthase_CS"/>
</dbReference>
<dbReference type="InterPro" id="IPR029044">
    <property type="entry name" value="Nucleotide-diphossugar_trans"/>
</dbReference>
<dbReference type="NCBIfam" id="TIGR00453">
    <property type="entry name" value="ispD"/>
    <property type="match status" value="1"/>
</dbReference>
<dbReference type="PANTHER" id="PTHR32125">
    <property type="entry name" value="2-C-METHYL-D-ERYTHRITOL 4-PHOSPHATE CYTIDYLYLTRANSFERASE, CHLOROPLASTIC"/>
    <property type="match status" value="1"/>
</dbReference>
<dbReference type="PANTHER" id="PTHR32125:SF4">
    <property type="entry name" value="2-C-METHYL-D-ERYTHRITOL 4-PHOSPHATE CYTIDYLYLTRANSFERASE, CHLOROPLASTIC"/>
    <property type="match status" value="1"/>
</dbReference>
<dbReference type="Pfam" id="PF01128">
    <property type="entry name" value="IspD"/>
    <property type="match status" value="1"/>
</dbReference>
<dbReference type="SUPFAM" id="SSF53448">
    <property type="entry name" value="Nucleotide-diphospho-sugar transferases"/>
    <property type="match status" value="1"/>
</dbReference>
<dbReference type="PROSITE" id="PS01295">
    <property type="entry name" value="ISPD"/>
    <property type="match status" value="1"/>
</dbReference>
<accession>B5FTS5</accession>
<gene>
    <name evidence="1" type="primary">ispD</name>
    <name type="ordered locus">SeD_A3240</name>
</gene>
<name>ISPD_SALDC</name>
<organism>
    <name type="scientific">Salmonella dublin (strain CT_02021853)</name>
    <dbReference type="NCBI Taxonomy" id="439851"/>
    <lineage>
        <taxon>Bacteria</taxon>
        <taxon>Pseudomonadati</taxon>
        <taxon>Pseudomonadota</taxon>
        <taxon>Gammaproteobacteria</taxon>
        <taxon>Enterobacterales</taxon>
        <taxon>Enterobacteriaceae</taxon>
        <taxon>Salmonella</taxon>
    </lineage>
</organism>
<comment type="function">
    <text evidence="1">Catalyzes the formation of 4-diphosphocytidyl-2-C-methyl-D-erythritol from CTP and 2-C-methyl-D-erythritol 4-phosphate (MEP).</text>
</comment>
<comment type="catalytic activity">
    <reaction evidence="1">
        <text>2-C-methyl-D-erythritol 4-phosphate + CTP + H(+) = 4-CDP-2-C-methyl-D-erythritol + diphosphate</text>
        <dbReference type="Rhea" id="RHEA:13429"/>
        <dbReference type="ChEBI" id="CHEBI:15378"/>
        <dbReference type="ChEBI" id="CHEBI:33019"/>
        <dbReference type="ChEBI" id="CHEBI:37563"/>
        <dbReference type="ChEBI" id="CHEBI:57823"/>
        <dbReference type="ChEBI" id="CHEBI:58262"/>
        <dbReference type="EC" id="2.7.7.60"/>
    </reaction>
</comment>
<comment type="pathway">
    <text evidence="1">Isoprenoid biosynthesis; isopentenyl diphosphate biosynthesis via DXP pathway; isopentenyl diphosphate from 1-deoxy-D-xylulose 5-phosphate: step 2/6.</text>
</comment>
<comment type="subunit">
    <text evidence="1">Homodimer.</text>
</comment>
<comment type="similarity">
    <text evidence="1">Belongs to the IspD/TarI cytidylyltransferase family. IspD subfamily.</text>
</comment>
<reference key="1">
    <citation type="journal article" date="2011" name="J. Bacteriol.">
        <title>Comparative genomics of 28 Salmonella enterica isolates: evidence for CRISPR-mediated adaptive sublineage evolution.</title>
        <authorList>
            <person name="Fricke W.F."/>
            <person name="Mammel M.K."/>
            <person name="McDermott P.F."/>
            <person name="Tartera C."/>
            <person name="White D.G."/>
            <person name="Leclerc J.E."/>
            <person name="Ravel J."/>
            <person name="Cebula T.A."/>
        </authorList>
    </citation>
    <scope>NUCLEOTIDE SEQUENCE [LARGE SCALE GENOMIC DNA]</scope>
    <source>
        <strain>CT_02021853</strain>
    </source>
</reference>
<evidence type="ECO:0000255" key="1">
    <source>
        <dbReference type="HAMAP-Rule" id="MF_00108"/>
    </source>
</evidence>
<sequence>MAATLLDVCAVVPAAGFGRRMQTECPKQYLSIGNKTILEHSVHALLAHPRVTRVVIAISPGDHRFAQLPLANHPQITVVDGGNERADSVLAGLQAVAKAQWVLVHDAARPCLHQDDLARLLTISENSRVGGILASPVRDTMKRGEPGKNAIAHTVERADLWHALTPQFFPRELLHDCLTRALNEGATITDEASALEYCGFHPALVEGRADNIKVTRPEDLALAEFYLTRTIHQEKA</sequence>
<keyword id="KW-0414">Isoprene biosynthesis</keyword>
<keyword id="KW-0548">Nucleotidyltransferase</keyword>
<keyword id="KW-0808">Transferase</keyword>